<protein>
    <recommendedName>
        <fullName evidence="1">Polyribonucleotide nucleotidyltransferase</fullName>
        <ecNumber evidence="1">2.7.7.8</ecNumber>
    </recommendedName>
    <alternativeName>
        <fullName evidence="1">Polynucleotide phosphorylase</fullName>
        <shortName evidence="1">PNPase</shortName>
    </alternativeName>
</protein>
<accession>Q63VN7</accession>
<evidence type="ECO:0000255" key="1">
    <source>
        <dbReference type="HAMAP-Rule" id="MF_01595"/>
    </source>
</evidence>
<feature type="chain" id="PRO_0000329558" description="Polyribonucleotide nucleotidyltransferase">
    <location>
        <begin position="1"/>
        <end position="713"/>
    </location>
</feature>
<feature type="domain" description="KH" evidence="1">
    <location>
        <begin position="560"/>
        <end position="619"/>
    </location>
</feature>
<feature type="domain" description="S1 motif" evidence="1">
    <location>
        <begin position="629"/>
        <end position="697"/>
    </location>
</feature>
<feature type="binding site" evidence="1">
    <location>
        <position position="493"/>
    </location>
    <ligand>
        <name>Mg(2+)</name>
        <dbReference type="ChEBI" id="CHEBI:18420"/>
    </ligand>
</feature>
<feature type="binding site" evidence="1">
    <location>
        <position position="499"/>
    </location>
    <ligand>
        <name>Mg(2+)</name>
        <dbReference type="ChEBI" id="CHEBI:18420"/>
    </ligand>
</feature>
<comment type="function">
    <text evidence="1">Involved in mRNA degradation. Catalyzes the phosphorolysis of single-stranded polyribonucleotides processively in the 3'- to 5'-direction.</text>
</comment>
<comment type="catalytic activity">
    <reaction evidence="1">
        <text>RNA(n+1) + phosphate = RNA(n) + a ribonucleoside 5'-diphosphate</text>
        <dbReference type="Rhea" id="RHEA:22096"/>
        <dbReference type="Rhea" id="RHEA-COMP:14527"/>
        <dbReference type="Rhea" id="RHEA-COMP:17342"/>
        <dbReference type="ChEBI" id="CHEBI:43474"/>
        <dbReference type="ChEBI" id="CHEBI:57930"/>
        <dbReference type="ChEBI" id="CHEBI:140395"/>
        <dbReference type="EC" id="2.7.7.8"/>
    </reaction>
</comment>
<comment type="cofactor">
    <cofactor evidence="1">
        <name>Mg(2+)</name>
        <dbReference type="ChEBI" id="CHEBI:18420"/>
    </cofactor>
</comment>
<comment type="subcellular location">
    <subcellularLocation>
        <location evidence="1">Cytoplasm</location>
    </subcellularLocation>
</comment>
<comment type="similarity">
    <text evidence="1">Belongs to the polyribonucleotide nucleotidyltransferase family.</text>
</comment>
<organism>
    <name type="scientific">Burkholderia pseudomallei (strain K96243)</name>
    <dbReference type="NCBI Taxonomy" id="272560"/>
    <lineage>
        <taxon>Bacteria</taxon>
        <taxon>Pseudomonadati</taxon>
        <taxon>Pseudomonadota</taxon>
        <taxon>Betaproteobacteria</taxon>
        <taxon>Burkholderiales</taxon>
        <taxon>Burkholderiaceae</taxon>
        <taxon>Burkholderia</taxon>
        <taxon>pseudomallei group</taxon>
    </lineage>
</organism>
<proteinExistence type="inferred from homology"/>
<keyword id="KW-0963">Cytoplasm</keyword>
<keyword id="KW-0460">Magnesium</keyword>
<keyword id="KW-0479">Metal-binding</keyword>
<keyword id="KW-0548">Nucleotidyltransferase</keyword>
<keyword id="KW-1185">Reference proteome</keyword>
<keyword id="KW-0694">RNA-binding</keyword>
<keyword id="KW-0808">Transferase</keyword>
<dbReference type="EC" id="2.7.7.8" evidence="1"/>
<dbReference type="EMBL" id="BX571965">
    <property type="protein sequence ID" value="CAH35202.1"/>
    <property type="molecule type" value="Genomic_DNA"/>
</dbReference>
<dbReference type="RefSeq" id="WP_004526459.1">
    <property type="nucleotide sequence ID" value="NZ_CP009538.1"/>
</dbReference>
<dbReference type="RefSeq" id="YP_107829.1">
    <property type="nucleotide sequence ID" value="NC_006350.1"/>
</dbReference>
<dbReference type="SMR" id="Q63VN7"/>
<dbReference type="STRING" id="272560.BPSL1207"/>
<dbReference type="GeneID" id="93059689"/>
<dbReference type="KEGG" id="bps:BPSL1207"/>
<dbReference type="PATRIC" id="fig|272560.51.peg.319"/>
<dbReference type="eggNOG" id="COG1185">
    <property type="taxonomic scope" value="Bacteria"/>
</dbReference>
<dbReference type="Proteomes" id="UP000000605">
    <property type="component" value="Chromosome 1"/>
</dbReference>
<dbReference type="GO" id="GO:0005829">
    <property type="term" value="C:cytosol"/>
    <property type="evidence" value="ECO:0007669"/>
    <property type="project" value="TreeGrafter"/>
</dbReference>
<dbReference type="GO" id="GO:0000175">
    <property type="term" value="F:3'-5'-RNA exonuclease activity"/>
    <property type="evidence" value="ECO:0007669"/>
    <property type="project" value="TreeGrafter"/>
</dbReference>
<dbReference type="GO" id="GO:0000287">
    <property type="term" value="F:magnesium ion binding"/>
    <property type="evidence" value="ECO:0007669"/>
    <property type="project" value="UniProtKB-UniRule"/>
</dbReference>
<dbReference type="GO" id="GO:0004654">
    <property type="term" value="F:polyribonucleotide nucleotidyltransferase activity"/>
    <property type="evidence" value="ECO:0007669"/>
    <property type="project" value="UniProtKB-UniRule"/>
</dbReference>
<dbReference type="GO" id="GO:0003723">
    <property type="term" value="F:RNA binding"/>
    <property type="evidence" value="ECO:0007669"/>
    <property type="project" value="UniProtKB-UniRule"/>
</dbReference>
<dbReference type="GO" id="GO:0006402">
    <property type="term" value="P:mRNA catabolic process"/>
    <property type="evidence" value="ECO:0007669"/>
    <property type="project" value="UniProtKB-UniRule"/>
</dbReference>
<dbReference type="GO" id="GO:0006396">
    <property type="term" value="P:RNA processing"/>
    <property type="evidence" value="ECO:0007669"/>
    <property type="project" value="InterPro"/>
</dbReference>
<dbReference type="CDD" id="cd02393">
    <property type="entry name" value="KH-I_PNPase"/>
    <property type="match status" value="1"/>
</dbReference>
<dbReference type="CDD" id="cd11363">
    <property type="entry name" value="RNase_PH_PNPase_1"/>
    <property type="match status" value="1"/>
</dbReference>
<dbReference type="CDD" id="cd11364">
    <property type="entry name" value="RNase_PH_PNPase_2"/>
    <property type="match status" value="1"/>
</dbReference>
<dbReference type="CDD" id="cd04472">
    <property type="entry name" value="S1_PNPase"/>
    <property type="match status" value="1"/>
</dbReference>
<dbReference type="FunFam" id="3.30.1370.10:FF:000001">
    <property type="entry name" value="Polyribonucleotide nucleotidyltransferase"/>
    <property type="match status" value="1"/>
</dbReference>
<dbReference type="FunFam" id="3.30.230.70:FF:000001">
    <property type="entry name" value="Polyribonucleotide nucleotidyltransferase"/>
    <property type="match status" value="1"/>
</dbReference>
<dbReference type="FunFam" id="3.30.230.70:FF:000002">
    <property type="entry name" value="Polyribonucleotide nucleotidyltransferase"/>
    <property type="match status" value="1"/>
</dbReference>
<dbReference type="FunFam" id="2.40.50.140:FF:000189">
    <property type="entry name" value="Polyribonucleotide nucleotidyltransferase, putative"/>
    <property type="match status" value="1"/>
</dbReference>
<dbReference type="Gene3D" id="3.30.230.70">
    <property type="entry name" value="GHMP Kinase, N-terminal domain"/>
    <property type="match status" value="2"/>
</dbReference>
<dbReference type="Gene3D" id="3.30.1370.10">
    <property type="entry name" value="K Homology domain, type 1"/>
    <property type="match status" value="1"/>
</dbReference>
<dbReference type="Gene3D" id="2.40.50.140">
    <property type="entry name" value="Nucleic acid-binding proteins"/>
    <property type="match status" value="1"/>
</dbReference>
<dbReference type="HAMAP" id="MF_01595">
    <property type="entry name" value="PNPase"/>
    <property type="match status" value="1"/>
</dbReference>
<dbReference type="InterPro" id="IPR001247">
    <property type="entry name" value="ExoRNase_PH_dom1"/>
</dbReference>
<dbReference type="InterPro" id="IPR015847">
    <property type="entry name" value="ExoRNase_PH_dom2"/>
</dbReference>
<dbReference type="InterPro" id="IPR036345">
    <property type="entry name" value="ExoRNase_PH_dom2_sf"/>
</dbReference>
<dbReference type="InterPro" id="IPR004087">
    <property type="entry name" value="KH_dom"/>
</dbReference>
<dbReference type="InterPro" id="IPR004088">
    <property type="entry name" value="KH_dom_type_1"/>
</dbReference>
<dbReference type="InterPro" id="IPR036612">
    <property type="entry name" value="KH_dom_type_1_sf"/>
</dbReference>
<dbReference type="InterPro" id="IPR012340">
    <property type="entry name" value="NA-bd_OB-fold"/>
</dbReference>
<dbReference type="InterPro" id="IPR012162">
    <property type="entry name" value="PNPase"/>
</dbReference>
<dbReference type="InterPro" id="IPR027408">
    <property type="entry name" value="PNPase/RNase_PH_dom_sf"/>
</dbReference>
<dbReference type="InterPro" id="IPR015848">
    <property type="entry name" value="PNPase_PH_RNA-bd_bac/org-type"/>
</dbReference>
<dbReference type="InterPro" id="IPR036456">
    <property type="entry name" value="PNPase_PH_RNA-bd_sf"/>
</dbReference>
<dbReference type="InterPro" id="IPR020568">
    <property type="entry name" value="Ribosomal_Su5_D2-typ_SF"/>
</dbReference>
<dbReference type="InterPro" id="IPR003029">
    <property type="entry name" value="S1_domain"/>
</dbReference>
<dbReference type="NCBIfam" id="TIGR03591">
    <property type="entry name" value="polynuc_phos"/>
    <property type="match status" value="1"/>
</dbReference>
<dbReference type="NCBIfam" id="NF008805">
    <property type="entry name" value="PRK11824.1"/>
    <property type="match status" value="1"/>
</dbReference>
<dbReference type="PANTHER" id="PTHR11252">
    <property type="entry name" value="POLYRIBONUCLEOTIDE NUCLEOTIDYLTRANSFERASE"/>
    <property type="match status" value="1"/>
</dbReference>
<dbReference type="PANTHER" id="PTHR11252:SF0">
    <property type="entry name" value="POLYRIBONUCLEOTIDE NUCLEOTIDYLTRANSFERASE 1, MITOCHONDRIAL"/>
    <property type="match status" value="1"/>
</dbReference>
<dbReference type="Pfam" id="PF00013">
    <property type="entry name" value="KH_1"/>
    <property type="match status" value="1"/>
</dbReference>
<dbReference type="Pfam" id="PF03726">
    <property type="entry name" value="PNPase"/>
    <property type="match status" value="1"/>
</dbReference>
<dbReference type="Pfam" id="PF01138">
    <property type="entry name" value="RNase_PH"/>
    <property type="match status" value="2"/>
</dbReference>
<dbReference type="Pfam" id="PF03725">
    <property type="entry name" value="RNase_PH_C"/>
    <property type="match status" value="2"/>
</dbReference>
<dbReference type="Pfam" id="PF00575">
    <property type="entry name" value="S1"/>
    <property type="match status" value="1"/>
</dbReference>
<dbReference type="PIRSF" id="PIRSF005499">
    <property type="entry name" value="PNPase"/>
    <property type="match status" value="1"/>
</dbReference>
<dbReference type="SMART" id="SM00322">
    <property type="entry name" value="KH"/>
    <property type="match status" value="1"/>
</dbReference>
<dbReference type="SMART" id="SM00316">
    <property type="entry name" value="S1"/>
    <property type="match status" value="1"/>
</dbReference>
<dbReference type="SUPFAM" id="SSF54791">
    <property type="entry name" value="Eukaryotic type KH-domain (KH-domain type I)"/>
    <property type="match status" value="1"/>
</dbReference>
<dbReference type="SUPFAM" id="SSF50249">
    <property type="entry name" value="Nucleic acid-binding proteins"/>
    <property type="match status" value="1"/>
</dbReference>
<dbReference type="SUPFAM" id="SSF46915">
    <property type="entry name" value="Polynucleotide phosphorylase/guanosine pentaphosphate synthase (PNPase/GPSI), domain 3"/>
    <property type="match status" value="1"/>
</dbReference>
<dbReference type="SUPFAM" id="SSF55666">
    <property type="entry name" value="Ribonuclease PH domain 2-like"/>
    <property type="match status" value="2"/>
</dbReference>
<dbReference type="SUPFAM" id="SSF54211">
    <property type="entry name" value="Ribosomal protein S5 domain 2-like"/>
    <property type="match status" value="2"/>
</dbReference>
<dbReference type="PROSITE" id="PS50084">
    <property type="entry name" value="KH_TYPE_1"/>
    <property type="match status" value="1"/>
</dbReference>
<dbReference type="PROSITE" id="PS50126">
    <property type="entry name" value="S1"/>
    <property type="match status" value="1"/>
</dbReference>
<name>PNP_BURPS</name>
<sequence>MSLFNKIVKEFQWGQHKVRLETGEIARQASGAVIVDIEDTVVLATVVGAKSAKPGQDFFPLTVDYIEKTYSAGKIPGGFFRREGRPSEHETLTSRLIDRPLRPLFPEGFYNEVQVVIHVLSVNPEIPADIPALIGASAALAVSGLPFNGPVGAARVAYVNNEYVLNPTREQIKASRLDLVVAGTERAVLMVESEADQLPEDVMLGAVVFGHEQMQTAIDAIHELVREGGKPEWDWQPAPKDEALNARVTELAQPELLAAYQIRDKQARSTKLKEVYAATSAKLEEEAVAAGTVAADKATVGNILFDLEAKIVRGQILNGEPRIDGRDTRTVRPIEIRTGVLPRTHGSALFTRGETQALVVATLGTKGDEQIIDALEGEYRERFMLHYNMPPFATGETGRVGSPKRREIGHGRLAKRALVACLPSADEFGYSIRVVSEITESNGSSSMASVCGGCLALMDAGVPMKAHVAGIAMGLILEGNKFAVLTDILGDEDHLGDMDFKVAGTADGVTALQMDIKIQGITKEIMQVALAQAKEGRMHILGKMKDAVAGANTQLSEFAPRMITIKINPEKIRDVIGKGGSVIRALTEETGTTIDISDDGVVTIASTNSEGMAEAKKRIENITAEIEVGHVYEGTVLKLLDFGAIVNLLPGKDGLLHISEIVNERVKDINDYLKEGQQVKVKVIQTDEKGRVRLSAKALLNEAAAQADTPPQQ</sequence>
<gene>
    <name evidence="1" type="primary">pnp</name>
    <name type="ordered locus">BPSL1207</name>
</gene>
<reference key="1">
    <citation type="journal article" date="2004" name="Proc. Natl. Acad. Sci. U.S.A.">
        <title>Genomic plasticity of the causative agent of melioidosis, Burkholderia pseudomallei.</title>
        <authorList>
            <person name="Holden M.T.G."/>
            <person name="Titball R.W."/>
            <person name="Peacock S.J."/>
            <person name="Cerdeno-Tarraga A.-M."/>
            <person name="Atkins T."/>
            <person name="Crossman L.C."/>
            <person name="Pitt T."/>
            <person name="Churcher C."/>
            <person name="Mungall K.L."/>
            <person name="Bentley S.D."/>
            <person name="Sebaihia M."/>
            <person name="Thomson N.R."/>
            <person name="Bason N."/>
            <person name="Beacham I.R."/>
            <person name="Brooks K."/>
            <person name="Brown K.A."/>
            <person name="Brown N.F."/>
            <person name="Challis G.L."/>
            <person name="Cherevach I."/>
            <person name="Chillingworth T."/>
            <person name="Cronin A."/>
            <person name="Crossett B."/>
            <person name="Davis P."/>
            <person name="DeShazer D."/>
            <person name="Feltwell T."/>
            <person name="Fraser A."/>
            <person name="Hance Z."/>
            <person name="Hauser H."/>
            <person name="Holroyd S."/>
            <person name="Jagels K."/>
            <person name="Keith K.E."/>
            <person name="Maddison M."/>
            <person name="Moule S."/>
            <person name="Price C."/>
            <person name="Quail M.A."/>
            <person name="Rabbinowitsch E."/>
            <person name="Rutherford K."/>
            <person name="Sanders M."/>
            <person name="Simmonds M."/>
            <person name="Songsivilai S."/>
            <person name="Stevens K."/>
            <person name="Tumapa S."/>
            <person name="Vesaratchavest M."/>
            <person name="Whitehead S."/>
            <person name="Yeats C."/>
            <person name="Barrell B.G."/>
            <person name="Oyston P.C.F."/>
            <person name="Parkhill J."/>
        </authorList>
    </citation>
    <scope>NUCLEOTIDE SEQUENCE [LARGE SCALE GENOMIC DNA]</scope>
    <source>
        <strain>K96243</strain>
    </source>
</reference>